<organism>
    <name type="scientific">Streptococcus pyogenes serotype M49 (strain NZ131)</name>
    <dbReference type="NCBI Taxonomy" id="471876"/>
    <lineage>
        <taxon>Bacteria</taxon>
        <taxon>Bacillati</taxon>
        <taxon>Bacillota</taxon>
        <taxon>Bacilli</taxon>
        <taxon>Lactobacillales</taxon>
        <taxon>Streptococcaceae</taxon>
        <taxon>Streptococcus</taxon>
    </lineage>
</organism>
<comment type="function">
    <text evidence="1">This protein is involved in the repair of mismatches in DNA. It is possible that it carries out the mismatch recognition step. This protein has a weak ATPase activity.</text>
</comment>
<comment type="similarity">
    <text evidence="1">Belongs to the DNA mismatch repair MutS family.</text>
</comment>
<dbReference type="EMBL" id="CP000829">
    <property type="protein sequence ID" value="ACI62009.1"/>
    <property type="molecule type" value="Genomic_DNA"/>
</dbReference>
<dbReference type="SMR" id="B5XJ75"/>
<dbReference type="KEGG" id="soz:Spy49_1759c"/>
<dbReference type="HOGENOM" id="CLU_002472_3_1_9"/>
<dbReference type="Proteomes" id="UP000001039">
    <property type="component" value="Chromosome"/>
</dbReference>
<dbReference type="GO" id="GO:0005829">
    <property type="term" value="C:cytosol"/>
    <property type="evidence" value="ECO:0007669"/>
    <property type="project" value="TreeGrafter"/>
</dbReference>
<dbReference type="GO" id="GO:0005524">
    <property type="term" value="F:ATP binding"/>
    <property type="evidence" value="ECO:0007669"/>
    <property type="project" value="UniProtKB-UniRule"/>
</dbReference>
<dbReference type="GO" id="GO:0140664">
    <property type="term" value="F:ATP-dependent DNA damage sensor activity"/>
    <property type="evidence" value="ECO:0007669"/>
    <property type="project" value="InterPro"/>
</dbReference>
<dbReference type="GO" id="GO:0003684">
    <property type="term" value="F:damaged DNA binding"/>
    <property type="evidence" value="ECO:0007669"/>
    <property type="project" value="UniProtKB-UniRule"/>
</dbReference>
<dbReference type="GO" id="GO:0030983">
    <property type="term" value="F:mismatched DNA binding"/>
    <property type="evidence" value="ECO:0007669"/>
    <property type="project" value="InterPro"/>
</dbReference>
<dbReference type="GO" id="GO:0006298">
    <property type="term" value="P:mismatch repair"/>
    <property type="evidence" value="ECO:0007669"/>
    <property type="project" value="UniProtKB-UniRule"/>
</dbReference>
<dbReference type="CDD" id="cd03284">
    <property type="entry name" value="ABC_MutS1"/>
    <property type="match status" value="1"/>
</dbReference>
<dbReference type="FunFam" id="1.10.1420.10:FF:000001">
    <property type="entry name" value="DNA mismatch repair protein MutS"/>
    <property type="match status" value="1"/>
</dbReference>
<dbReference type="FunFam" id="3.40.1170.10:FF:000001">
    <property type="entry name" value="DNA mismatch repair protein MutS"/>
    <property type="match status" value="1"/>
</dbReference>
<dbReference type="FunFam" id="3.40.50.300:FF:000896">
    <property type="entry name" value="DNA mismatch repair protein MutS"/>
    <property type="match status" value="1"/>
</dbReference>
<dbReference type="Gene3D" id="1.10.1420.10">
    <property type="match status" value="2"/>
</dbReference>
<dbReference type="Gene3D" id="3.40.1170.10">
    <property type="entry name" value="DNA repair protein MutS, domain I"/>
    <property type="match status" value="1"/>
</dbReference>
<dbReference type="Gene3D" id="3.30.420.110">
    <property type="entry name" value="MutS, connector domain"/>
    <property type="match status" value="1"/>
</dbReference>
<dbReference type="Gene3D" id="3.40.50.300">
    <property type="entry name" value="P-loop containing nucleotide triphosphate hydrolases"/>
    <property type="match status" value="1"/>
</dbReference>
<dbReference type="HAMAP" id="MF_00096">
    <property type="entry name" value="MutS"/>
    <property type="match status" value="1"/>
</dbReference>
<dbReference type="InterPro" id="IPR005748">
    <property type="entry name" value="DNA_mismatch_repair_MutS"/>
</dbReference>
<dbReference type="InterPro" id="IPR007695">
    <property type="entry name" value="DNA_mismatch_repair_MutS-lik_N"/>
</dbReference>
<dbReference type="InterPro" id="IPR017261">
    <property type="entry name" value="DNA_mismatch_repair_MutS/MSH"/>
</dbReference>
<dbReference type="InterPro" id="IPR000432">
    <property type="entry name" value="DNA_mismatch_repair_MutS_C"/>
</dbReference>
<dbReference type="InterPro" id="IPR007861">
    <property type="entry name" value="DNA_mismatch_repair_MutS_clamp"/>
</dbReference>
<dbReference type="InterPro" id="IPR007696">
    <property type="entry name" value="DNA_mismatch_repair_MutS_core"/>
</dbReference>
<dbReference type="InterPro" id="IPR016151">
    <property type="entry name" value="DNA_mismatch_repair_MutS_N"/>
</dbReference>
<dbReference type="InterPro" id="IPR036187">
    <property type="entry name" value="DNA_mismatch_repair_MutS_sf"/>
</dbReference>
<dbReference type="InterPro" id="IPR007860">
    <property type="entry name" value="DNA_mmatch_repair_MutS_con_dom"/>
</dbReference>
<dbReference type="InterPro" id="IPR045076">
    <property type="entry name" value="MutS"/>
</dbReference>
<dbReference type="InterPro" id="IPR036678">
    <property type="entry name" value="MutS_con_dom_sf"/>
</dbReference>
<dbReference type="InterPro" id="IPR027417">
    <property type="entry name" value="P-loop_NTPase"/>
</dbReference>
<dbReference type="NCBIfam" id="TIGR01070">
    <property type="entry name" value="mutS1"/>
    <property type="match status" value="1"/>
</dbReference>
<dbReference type="NCBIfam" id="NF003810">
    <property type="entry name" value="PRK05399.1"/>
    <property type="match status" value="1"/>
</dbReference>
<dbReference type="PANTHER" id="PTHR11361:SF34">
    <property type="entry name" value="DNA MISMATCH REPAIR PROTEIN MSH1, MITOCHONDRIAL"/>
    <property type="match status" value="1"/>
</dbReference>
<dbReference type="PANTHER" id="PTHR11361">
    <property type="entry name" value="DNA MISMATCH REPAIR PROTEIN MUTS FAMILY MEMBER"/>
    <property type="match status" value="1"/>
</dbReference>
<dbReference type="Pfam" id="PF01624">
    <property type="entry name" value="MutS_I"/>
    <property type="match status" value="1"/>
</dbReference>
<dbReference type="Pfam" id="PF05188">
    <property type="entry name" value="MutS_II"/>
    <property type="match status" value="1"/>
</dbReference>
<dbReference type="Pfam" id="PF05192">
    <property type="entry name" value="MutS_III"/>
    <property type="match status" value="1"/>
</dbReference>
<dbReference type="Pfam" id="PF05190">
    <property type="entry name" value="MutS_IV"/>
    <property type="match status" value="1"/>
</dbReference>
<dbReference type="Pfam" id="PF00488">
    <property type="entry name" value="MutS_V"/>
    <property type="match status" value="1"/>
</dbReference>
<dbReference type="PIRSF" id="PIRSF037677">
    <property type="entry name" value="DNA_mis_repair_Msh6"/>
    <property type="match status" value="1"/>
</dbReference>
<dbReference type="SMART" id="SM00534">
    <property type="entry name" value="MUTSac"/>
    <property type="match status" value="1"/>
</dbReference>
<dbReference type="SMART" id="SM00533">
    <property type="entry name" value="MUTSd"/>
    <property type="match status" value="1"/>
</dbReference>
<dbReference type="SUPFAM" id="SSF55271">
    <property type="entry name" value="DNA repair protein MutS, domain I"/>
    <property type="match status" value="1"/>
</dbReference>
<dbReference type="SUPFAM" id="SSF53150">
    <property type="entry name" value="DNA repair protein MutS, domain II"/>
    <property type="match status" value="1"/>
</dbReference>
<dbReference type="SUPFAM" id="SSF48334">
    <property type="entry name" value="DNA repair protein MutS, domain III"/>
    <property type="match status" value="1"/>
</dbReference>
<dbReference type="SUPFAM" id="SSF52540">
    <property type="entry name" value="P-loop containing nucleoside triphosphate hydrolases"/>
    <property type="match status" value="1"/>
</dbReference>
<dbReference type="PROSITE" id="PS00486">
    <property type="entry name" value="DNA_MISMATCH_REPAIR_2"/>
    <property type="match status" value="1"/>
</dbReference>
<sequence length="851" mass="95530">MAKTNISPGMQQYLDIKKDYPDAFLLFRMGDFYELFYEDAVKAAQLLEIGLTSRNKNAENPIPMAGVPHHSAQQYIDVLIELGYKVAVAEQMEDPKQAVGVVKREVVQVITPGTVVDSAKPDSANNFLVAVDFDGCRYGLAYMDVSTGEFCVTDLADFTSVRSEIQNLKAKEVLLGFDLSEEEQTILVKQMNLLLSYEETVYEDKSLIDGQLTTVELTAAGKLLQYVHKTQMRELSHLQALVHYEIKDYLQMSYATKSSLDLVENARTNKKHGSLYWLLDETKTAMGMRLLRSWIDRPLVSKEAILERQEIIQVFLNAFIERTDLSNSLKGVYDIERLSSRVSFGKANPKDLLQLGHTLAQVPYIKAILESFDSPCVDKLVNDIDSLPELEYLIRTAIDPDAPATISEGSIIRNGFDERLDHYRKVMREGTGWIADIEAKERQESGINNLKIDYNKKDGYYFHVTNSNLSLVPEHFFRKATLKNSERYGTAELAKIEGQMLEAREESSSLEYDIFMCIRAQVETYINRLQKLAKTLATVDVLQSLAVVAETNHYIRPQFNDNHVITIQEGRHAVVEKVMGVQEYIPNSISFDQQTSIQLITGPNMSGKSTYMRQLALTVIMAQMGSFVAADHVDLPLFDAIFTRIGAADDLISGQSTFMVEMMEANQAIKRASDNSLILFDELGRGTATYDGMALAQAIIEYIHDRVGAKTIFATHYHELTDLSTKLTSLVNVHVATLEKDGDVTFLHKIAEGPADKSYGIHVAKIAGLPKSLLKRADEVLTRLETQSRSTEIISVPSQVESSNAVRQGQLSLFGDEEKAHEIRQALEAIDVMNMTPLQAMTTLYELKKLL</sequence>
<protein>
    <recommendedName>
        <fullName evidence="1">DNA mismatch repair protein MutS</fullName>
    </recommendedName>
</protein>
<name>MUTS_STRPZ</name>
<evidence type="ECO:0000255" key="1">
    <source>
        <dbReference type="HAMAP-Rule" id="MF_00096"/>
    </source>
</evidence>
<keyword id="KW-0067">ATP-binding</keyword>
<keyword id="KW-0227">DNA damage</keyword>
<keyword id="KW-0234">DNA repair</keyword>
<keyword id="KW-0238">DNA-binding</keyword>
<keyword id="KW-0547">Nucleotide-binding</keyword>
<feature type="chain" id="PRO_1000093650" description="DNA mismatch repair protein MutS">
    <location>
        <begin position="1"/>
        <end position="851"/>
    </location>
</feature>
<feature type="binding site" evidence="1">
    <location>
        <begin position="602"/>
        <end position="609"/>
    </location>
    <ligand>
        <name>ATP</name>
        <dbReference type="ChEBI" id="CHEBI:30616"/>
    </ligand>
</feature>
<accession>B5XJ75</accession>
<gene>
    <name evidence="1" type="primary">mutS</name>
    <name type="ordered locus">Spy49_1759c</name>
</gene>
<proteinExistence type="inferred from homology"/>
<reference key="1">
    <citation type="journal article" date="2008" name="J. Bacteriol.">
        <title>Genome sequence of a nephritogenic and highly transformable M49 strain of Streptococcus pyogenes.</title>
        <authorList>
            <person name="McShan W.M."/>
            <person name="Ferretti J.J."/>
            <person name="Karasawa T."/>
            <person name="Suvorov A.N."/>
            <person name="Lin S."/>
            <person name="Qin B."/>
            <person name="Jia H."/>
            <person name="Kenton S."/>
            <person name="Najar F."/>
            <person name="Wu H."/>
            <person name="Scott J."/>
            <person name="Roe B.A."/>
            <person name="Savic D.J."/>
        </authorList>
    </citation>
    <scope>NUCLEOTIDE SEQUENCE [LARGE SCALE GENOMIC DNA]</scope>
    <source>
        <strain>NZ131</strain>
    </source>
</reference>